<sequence>MSKQLIYSGKAKDIYTTEDENLIISTYKDQATAFNGVKKEQIAGKGVLNNQISSFIFEKLNVAGVATHFVEKLSDTEQLNKKVKIIPLEVVLRNYTAGSFSKRFGVDEGIALETPIVEFYYKNDDLDDPFINDEHVKFLQIAGDQQIAYLKEETRRINELLKVWFAEIGLKLIDFKLEFGFDKDGKIILADEFSPDNCRLWDADGNHMDKDVFRRGLGELTDVYEIVWEKLQGLK</sequence>
<organism>
    <name type="scientific">Streptococcus pneumoniae (strain ATCC 700669 / Spain 23F-1)</name>
    <dbReference type="NCBI Taxonomy" id="561276"/>
    <lineage>
        <taxon>Bacteria</taxon>
        <taxon>Bacillati</taxon>
        <taxon>Bacillota</taxon>
        <taxon>Bacilli</taxon>
        <taxon>Lactobacillales</taxon>
        <taxon>Streptococcaceae</taxon>
        <taxon>Streptococcus</taxon>
    </lineage>
</organism>
<comment type="catalytic activity">
    <reaction evidence="1">
        <text>5-amino-1-(5-phospho-D-ribosyl)imidazole-4-carboxylate + L-aspartate + ATP = (2S)-2-[5-amino-1-(5-phospho-beta-D-ribosyl)imidazole-4-carboxamido]succinate + ADP + phosphate + 2 H(+)</text>
        <dbReference type="Rhea" id="RHEA:22628"/>
        <dbReference type="ChEBI" id="CHEBI:15378"/>
        <dbReference type="ChEBI" id="CHEBI:29991"/>
        <dbReference type="ChEBI" id="CHEBI:30616"/>
        <dbReference type="ChEBI" id="CHEBI:43474"/>
        <dbReference type="ChEBI" id="CHEBI:58443"/>
        <dbReference type="ChEBI" id="CHEBI:77657"/>
        <dbReference type="ChEBI" id="CHEBI:456216"/>
        <dbReference type="EC" id="6.3.2.6"/>
    </reaction>
</comment>
<comment type="pathway">
    <text evidence="1">Purine metabolism; IMP biosynthesis via de novo pathway; 5-amino-1-(5-phospho-D-ribosyl)imidazole-4-carboxamide from 5-amino-1-(5-phospho-D-ribosyl)imidazole-4-carboxylate: step 1/2.</text>
</comment>
<comment type="similarity">
    <text evidence="1">Belongs to the SAICAR synthetase family.</text>
</comment>
<feature type="chain" id="PRO_1000122933" description="Phosphoribosylaminoimidazole-succinocarboxamide synthase">
    <location>
        <begin position="1"/>
        <end position="235"/>
    </location>
</feature>
<protein>
    <recommendedName>
        <fullName evidence="1">Phosphoribosylaminoimidazole-succinocarboxamide synthase</fullName>
        <ecNumber evidence="1">6.3.2.6</ecNumber>
    </recommendedName>
    <alternativeName>
        <fullName evidence="1">SAICAR synthetase</fullName>
    </alternativeName>
</protein>
<accession>B8ZJM7</accession>
<proteinExistence type="inferred from homology"/>
<name>PUR7_STRPJ</name>
<keyword id="KW-0067">ATP-binding</keyword>
<keyword id="KW-0436">Ligase</keyword>
<keyword id="KW-0547">Nucleotide-binding</keyword>
<keyword id="KW-0658">Purine biosynthesis</keyword>
<evidence type="ECO:0000255" key="1">
    <source>
        <dbReference type="HAMAP-Rule" id="MF_00137"/>
    </source>
</evidence>
<reference key="1">
    <citation type="journal article" date="2009" name="J. Bacteriol.">
        <title>Role of conjugative elements in the evolution of the multidrug-resistant pandemic clone Streptococcus pneumoniae Spain23F ST81.</title>
        <authorList>
            <person name="Croucher N.J."/>
            <person name="Walker D."/>
            <person name="Romero P."/>
            <person name="Lennard N."/>
            <person name="Paterson G.K."/>
            <person name="Bason N.C."/>
            <person name="Mitchell A.M."/>
            <person name="Quail M.A."/>
            <person name="Andrew P.W."/>
            <person name="Parkhill J."/>
            <person name="Bentley S.D."/>
            <person name="Mitchell T.J."/>
        </authorList>
    </citation>
    <scope>NUCLEOTIDE SEQUENCE [LARGE SCALE GENOMIC DNA]</scope>
    <source>
        <strain>ATCC 700669 / Spain 23F-1</strain>
    </source>
</reference>
<gene>
    <name evidence="1" type="primary">purC</name>
    <name type="ordered locus">SPN23F00610</name>
</gene>
<dbReference type="EC" id="6.3.2.6" evidence="1"/>
<dbReference type="EMBL" id="FM211187">
    <property type="protein sequence ID" value="CAR67921.1"/>
    <property type="molecule type" value="Genomic_DNA"/>
</dbReference>
<dbReference type="RefSeq" id="WP_000043310.1">
    <property type="nucleotide sequence ID" value="NC_011900.1"/>
</dbReference>
<dbReference type="SMR" id="B8ZJM7"/>
<dbReference type="KEGG" id="sne:SPN23F00610"/>
<dbReference type="HOGENOM" id="CLU_061495_2_0_9"/>
<dbReference type="UniPathway" id="UPA00074">
    <property type="reaction ID" value="UER00131"/>
</dbReference>
<dbReference type="GO" id="GO:0005524">
    <property type="term" value="F:ATP binding"/>
    <property type="evidence" value="ECO:0007669"/>
    <property type="project" value="UniProtKB-KW"/>
</dbReference>
<dbReference type="GO" id="GO:0004639">
    <property type="term" value="F:phosphoribosylaminoimidazolesuccinocarboxamide synthase activity"/>
    <property type="evidence" value="ECO:0007669"/>
    <property type="project" value="UniProtKB-UniRule"/>
</dbReference>
<dbReference type="GO" id="GO:0006189">
    <property type="term" value="P:'de novo' IMP biosynthetic process"/>
    <property type="evidence" value="ECO:0007669"/>
    <property type="project" value="UniProtKB-UniRule"/>
</dbReference>
<dbReference type="GO" id="GO:0009236">
    <property type="term" value="P:cobalamin biosynthetic process"/>
    <property type="evidence" value="ECO:0007669"/>
    <property type="project" value="InterPro"/>
</dbReference>
<dbReference type="CDD" id="cd01415">
    <property type="entry name" value="SAICAR_synt_PurC"/>
    <property type="match status" value="1"/>
</dbReference>
<dbReference type="FunFam" id="3.30.200.20:FF:000189">
    <property type="entry name" value="Phosphoribosylaminoimidazole-succinocarboxamide synthase"/>
    <property type="match status" value="1"/>
</dbReference>
<dbReference type="FunFam" id="3.30.470.20:FF:000006">
    <property type="entry name" value="Phosphoribosylaminoimidazole-succinocarboxamide synthase"/>
    <property type="match status" value="1"/>
</dbReference>
<dbReference type="Gene3D" id="3.30.470.20">
    <property type="entry name" value="ATP-grasp fold, B domain"/>
    <property type="match status" value="1"/>
</dbReference>
<dbReference type="Gene3D" id="3.30.200.20">
    <property type="entry name" value="Phosphorylase Kinase, domain 1"/>
    <property type="match status" value="1"/>
</dbReference>
<dbReference type="HAMAP" id="MF_00137">
    <property type="entry name" value="SAICAR_synth"/>
    <property type="match status" value="1"/>
</dbReference>
<dbReference type="InterPro" id="IPR028923">
    <property type="entry name" value="SAICAR_synt/ADE2_N"/>
</dbReference>
<dbReference type="InterPro" id="IPR033934">
    <property type="entry name" value="SAICAR_synt_PurC"/>
</dbReference>
<dbReference type="InterPro" id="IPR001636">
    <property type="entry name" value="SAICAR_synth"/>
</dbReference>
<dbReference type="InterPro" id="IPR050089">
    <property type="entry name" value="SAICAR_synthetase"/>
</dbReference>
<dbReference type="InterPro" id="IPR018236">
    <property type="entry name" value="SAICAR_synthetase_CS"/>
</dbReference>
<dbReference type="NCBIfam" id="TIGR00081">
    <property type="entry name" value="purC"/>
    <property type="match status" value="1"/>
</dbReference>
<dbReference type="PANTHER" id="PTHR43599">
    <property type="entry name" value="MULTIFUNCTIONAL PROTEIN ADE2"/>
    <property type="match status" value="1"/>
</dbReference>
<dbReference type="PANTHER" id="PTHR43599:SF3">
    <property type="entry name" value="SI:DKEY-6E2.2"/>
    <property type="match status" value="1"/>
</dbReference>
<dbReference type="Pfam" id="PF01259">
    <property type="entry name" value="SAICAR_synt"/>
    <property type="match status" value="1"/>
</dbReference>
<dbReference type="SUPFAM" id="SSF56104">
    <property type="entry name" value="SAICAR synthase-like"/>
    <property type="match status" value="1"/>
</dbReference>
<dbReference type="PROSITE" id="PS01057">
    <property type="entry name" value="SAICAR_SYNTHETASE_1"/>
    <property type="match status" value="1"/>
</dbReference>
<dbReference type="PROSITE" id="PS01058">
    <property type="entry name" value="SAICAR_SYNTHETASE_2"/>
    <property type="match status" value="1"/>
</dbReference>